<evidence type="ECO:0000269" key="1">
    <source>
    </source>
</evidence>
<evidence type="ECO:0000269" key="2">
    <source>
    </source>
</evidence>
<evidence type="ECO:0000269" key="3">
    <source>
    </source>
</evidence>
<evidence type="ECO:0000269" key="4">
    <source>
    </source>
</evidence>
<evidence type="ECO:0000305" key="5"/>
<evidence type="ECO:0007829" key="6">
    <source>
        <dbReference type="PDB" id="4A5X"/>
    </source>
</evidence>
<evidence type="ECO:0007829" key="7">
    <source>
        <dbReference type="PDB" id="4A5Z"/>
    </source>
</evidence>
<proteinExistence type="evidence at protein level"/>
<comment type="function">
    <text evidence="3 4">Required for efficient abscission at the end of cytokinesis, together with components of the ESCRT-III complex.</text>
</comment>
<comment type="subunit">
    <text evidence="1 2 3 4">Homodimer. Interacts (via MIT domain) with CHMP1A, CHMP1B, CHMP2A and IST1.</text>
</comment>
<comment type="interaction">
    <interactant intactId="EBI-2691489">
        <id>Q8WV92</id>
    </interactant>
    <interactant intactId="EBI-3866279">
        <id>Q9BWT7</id>
        <label>CARD10</label>
    </interactant>
    <organismsDiffer>false</organismsDiffer>
    <experiments>3</experiments>
</comment>
<comment type="interaction">
    <interactant intactId="EBI-2691489">
        <id>Q8WV92</id>
    </interactant>
    <interactant intactId="EBI-1057156">
        <id>Q9HD42</id>
        <label>CHMP1A</label>
    </interactant>
    <organismsDiffer>false</organismsDiffer>
    <experiments>3</experiments>
</comment>
<comment type="interaction">
    <interactant intactId="EBI-2691489">
        <id>Q8WV92</id>
    </interactant>
    <interactant intactId="EBI-2118090">
        <id>Q7LBR1</id>
        <label>CHMP1B</label>
    </interactant>
    <organismsDiffer>false</organismsDiffer>
    <experiments>3</experiments>
</comment>
<comment type="interaction">
    <interactant intactId="EBI-2691489">
        <id>Q8WV92</id>
    </interactant>
    <interactant intactId="EBI-2692789">
        <id>O43633</id>
        <label>CHMP2A</label>
    </interactant>
    <organismsDiffer>false</organismsDiffer>
    <experiments>8</experiments>
</comment>
<comment type="interaction">
    <interactant intactId="EBI-2691489">
        <id>Q8WV92</id>
    </interactant>
    <interactant intactId="EBI-751303">
        <id>Q9NZZ3</id>
        <label>CHMP5</label>
    </interactant>
    <organismsDiffer>false</organismsDiffer>
    <experiments>3</experiments>
</comment>
<comment type="interaction">
    <interactant intactId="EBI-2691489">
        <id>Q8WV92</id>
    </interactant>
    <interactant intactId="EBI-11043087">
        <id>Q9NQX3-2</id>
        <label>GPHN</label>
    </interactant>
    <organismsDiffer>false</organismsDiffer>
    <experiments>3</experiments>
</comment>
<comment type="interaction">
    <interactant intactId="EBI-2691489">
        <id>Q8WV92</id>
    </interactant>
    <interactant intactId="EBI-2556193">
        <id>Q63ZY3</id>
        <label>KANK2</label>
    </interactant>
    <organismsDiffer>false</organismsDiffer>
    <experiments>3</experiments>
</comment>
<comment type="interaction">
    <interactant intactId="EBI-2691489">
        <id>Q8WV92</id>
    </interactant>
    <interactant intactId="EBI-2691489">
        <id>Q8WV92</id>
        <label>MITD1</label>
    </interactant>
    <organismsDiffer>false</organismsDiffer>
    <experiments>3</experiments>
</comment>
<comment type="interaction">
    <interactant intactId="EBI-2691489">
        <id>Q8WV92</id>
    </interactant>
    <interactant intactId="EBI-741158">
        <id>Q96HA8</id>
        <label>NTAQ1</label>
    </interactant>
    <organismsDiffer>false</organismsDiffer>
    <experiments>3</experiments>
</comment>
<comment type="interaction">
    <interactant intactId="EBI-2691489">
        <id>Q8WV92</id>
    </interactant>
    <interactant intactId="EBI-11525735">
        <id>O95197-3</id>
        <label>RTN3</label>
    </interactant>
    <organismsDiffer>false</organismsDiffer>
    <experiments>3</experiments>
</comment>
<comment type="interaction">
    <interactant intactId="EBI-2691489">
        <id>Q8WV92</id>
    </interactant>
    <interactant intactId="EBI-2555404">
        <id>Q6PID6</id>
        <label>TTC33</label>
    </interactant>
    <organismsDiffer>false</organismsDiffer>
    <experiments>3</experiments>
</comment>
<comment type="interaction">
    <interactant intactId="EBI-2691489">
        <id>Q8WV92</id>
    </interactant>
    <interactant intactId="EBI-6448240">
        <id>Q96K21</id>
        <label>ZFYVE19</label>
    </interactant>
    <organismsDiffer>false</organismsDiffer>
    <experiments>6</experiments>
</comment>
<comment type="interaction">
    <interactant intactId="EBI-2691489">
        <id>Q8WV92</id>
    </interactant>
    <interactant intactId="EBI-10187928">
        <id>Q96K21-3</id>
        <label>ZFYVE19</label>
    </interactant>
    <organismsDiffer>false</organismsDiffer>
    <experiments>3</experiments>
</comment>
<comment type="interaction">
    <interactant intactId="EBI-2691489">
        <id>Q8WV92</id>
    </interactant>
    <interactant intactId="EBI-625509">
        <id>Q8N720</id>
        <label>ZNF655</label>
    </interactant>
    <organismsDiffer>false</organismsDiffer>
    <experiments>3</experiments>
</comment>
<comment type="interaction">
    <interactant intactId="EBI-2691489">
        <id>Q8WV92</id>
    </interactant>
    <interactant intactId="EBI-6164309">
        <id>P04618</id>
        <label>rev</label>
    </interactant>
    <organismsDiffer>true</organismsDiffer>
    <experiments>2</experiments>
</comment>
<comment type="subcellular location">
    <subcellularLocation>
        <location>Late endosome membrane</location>
        <topology>Peripheral membrane protein</topology>
        <orientation>Cytoplasmic side</orientation>
    </subcellularLocation>
    <subcellularLocation>
        <location>Midbody</location>
    </subcellularLocation>
    <subcellularLocation>
        <location>Membrane</location>
        <topology>Peripheral membrane protein</topology>
        <orientation>Cytoplasmic side</orientation>
    </subcellularLocation>
    <text>During cytokinesis, recruited to the midbody via interaction with CHMP1A. Interacts with membranes enriched in phosphoinositides.</text>
</comment>
<comment type="domain">
    <text evidence="4">The C-terminal domain interacts with lipid membranes containing acidic phosphoinositides and is required for location at the midbody.</text>
</comment>
<comment type="domain">
    <text evidence="4">The MIT domain interacts with the MIT-interacting motifs of several components of the ESCRT-III complex.</text>
</comment>
<reference key="1">
    <citation type="journal article" date="2005" name="Nature">
        <title>Generation and annotation of the DNA sequences of human chromosomes 2 and 4.</title>
        <authorList>
            <person name="Hillier L.W."/>
            <person name="Graves T.A."/>
            <person name="Fulton R.S."/>
            <person name="Fulton L.A."/>
            <person name="Pepin K.H."/>
            <person name="Minx P."/>
            <person name="Wagner-McPherson C."/>
            <person name="Layman D."/>
            <person name="Wylie K."/>
            <person name="Sekhon M."/>
            <person name="Becker M.C."/>
            <person name="Fewell G.A."/>
            <person name="Delehaunty K.D."/>
            <person name="Miner T.L."/>
            <person name="Nash W.E."/>
            <person name="Kremitzki C."/>
            <person name="Oddy L."/>
            <person name="Du H."/>
            <person name="Sun H."/>
            <person name="Bradshaw-Cordum H."/>
            <person name="Ali J."/>
            <person name="Carter J."/>
            <person name="Cordes M."/>
            <person name="Harris A."/>
            <person name="Isak A."/>
            <person name="van Brunt A."/>
            <person name="Nguyen C."/>
            <person name="Du F."/>
            <person name="Courtney L."/>
            <person name="Kalicki J."/>
            <person name="Ozersky P."/>
            <person name="Abbott S."/>
            <person name="Armstrong J."/>
            <person name="Belter E.A."/>
            <person name="Caruso L."/>
            <person name="Cedroni M."/>
            <person name="Cotton M."/>
            <person name="Davidson T."/>
            <person name="Desai A."/>
            <person name="Elliott G."/>
            <person name="Erb T."/>
            <person name="Fronick C."/>
            <person name="Gaige T."/>
            <person name="Haakenson W."/>
            <person name="Haglund K."/>
            <person name="Holmes A."/>
            <person name="Harkins R."/>
            <person name="Kim K."/>
            <person name="Kruchowski S.S."/>
            <person name="Strong C.M."/>
            <person name="Grewal N."/>
            <person name="Goyea E."/>
            <person name="Hou S."/>
            <person name="Levy A."/>
            <person name="Martinka S."/>
            <person name="Mead K."/>
            <person name="McLellan M.D."/>
            <person name="Meyer R."/>
            <person name="Randall-Maher J."/>
            <person name="Tomlinson C."/>
            <person name="Dauphin-Kohlberg S."/>
            <person name="Kozlowicz-Reilly A."/>
            <person name="Shah N."/>
            <person name="Swearengen-Shahid S."/>
            <person name="Snider J."/>
            <person name="Strong J.T."/>
            <person name="Thompson J."/>
            <person name="Yoakum M."/>
            <person name="Leonard S."/>
            <person name="Pearman C."/>
            <person name="Trani L."/>
            <person name="Radionenko M."/>
            <person name="Waligorski J.E."/>
            <person name="Wang C."/>
            <person name="Rock S.M."/>
            <person name="Tin-Wollam A.-M."/>
            <person name="Maupin R."/>
            <person name="Latreille P."/>
            <person name="Wendl M.C."/>
            <person name="Yang S.-P."/>
            <person name="Pohl C."/>
            <person name="Wallis J.W."/>
            <person name="Spieth J."/>
            <person name="Bieri T.A."/>
            <person name="Berkowicz N."/>
            <person name="Nelson J.O."/>
            <person name="Osborne J."/>
            <person name="Ding L."/>
            <person name="Meyer R."/>
            <person name="Sabo A."/>
            <person name="Shotland Y."/>
            <person name="Sinha P."/>
            <person name="Wohldmann P.E."/>
            <person name="Cook L.L."/>
            <person name="Hickenbotham M.T."/>
            <person name="Eldred J."/>
            <person name="Williams D."/>
            <person name="Jones T.A."/>
            <person name="She X."/>
            <person name="Ciccarelli F.D."/>
            <person name="Izaurralde E."/>
            <person name="Taylor J."/>
            <person name="Schmutz J."/>
            <person name="Myers R.M."/>
            <person name="Cox D.R."/>
            <person name="Huang X."/>
            <person name="McPherson J.D."/>
            <person name="Mardis E.R."/>
            <person name="Clifton S.W."/>
            <person name="Warren W.C."/>
            <person name="Chinwalla A.T."/>
            <person name="Eddy S.R."/>
            <person name="Marra M.A."/>
            <person name="Ovcharenko I."/>
            <person name="Furey T.S."/>
            <person name="Miller W."/>
            <person name="Eichler E.E."/>
            <person name="Bork P."/>
            <person name="Suyama M."/>
            <person name="Torrents D."/>
            <person name="Waterston R.H."/>
            <person name="Wilson R.K."/>
        </authorList>
    </citation>
    <scope>NUCLEOTIDE SEQUENCE [LARGE SCALE GENOMIC DNA]</scope>
</reference>
<reference key="2">
    <citation type="journal article" date="2004" name="Genome Res.">
        <title>The status, quality, and expansion of the NIH full-length cDNA project: the Mammalian Gene Collection (MGC).</title>
        <authorList>
            <consortium name="The MGC Project Team"/>
        </authorList>
    </citation>
    <scope>NUCLEOTIDE SEQUENCE [LARGE SCALE MRNA]</scope>
    <source>
        <tissue>Testis</tissue>
    </source>
</reference>
<reference key="3">
    <citation type="journal article" date="2007" name="BMC Genomics">
        <title>The full-ORF clone resource of the German cDNA consortium.</title>
        <authorList>
            <person name="Bechtel S."/>
            <person name="Rosenfelder H."/>
            <person name="Duda A."/>
            <person name="Schmidt C.P."/>
            <person name="Ernst U."/>
            <person name="Wellenreuther R."/>
            <person name="Mehrle A."/>
            <person name="Schuster C."/>
            <person name="Bahr A."/>
            <person name="Bloecker H."/>
            <person name="Heubner D."/>
            <person name="Hoerlein A."/>
            <person name="Michel G."/>
            <person name="Wedler H."/>
            <person name="Koehrer K."/>
            <person name="Ottenwaelder B."/>
            <person name="Poustka A."/>
            <person name="Wiemann S."/>
            <person name="Schupp I."/>
        </authorList>
    </citation>
    <scope>NUCLEOTIDE SEQUENCE [LARGE SCALE MRNA] OF 8-249</scope>
    <source>
        <tissue>Amygdala</tissue>
    </source>
</reference>
<reference key="4">
    <citation type="journal article" date="2006" name="Genomics">
        <title>A systematic analysis of human CHMP protein interactions: additional MIT domain-containing proteins bind to multiple components of the human ESCRT III complex.</title>
        <authorList>
            <person name="Tsang H.T.H."/>
            <person name="Connell J.W."/>
            <person name="Brown S.E."/>
            <person name="Thompson A."/>
            <person name="Reid E."/>
            <person name="Sanderson C.M."/>
        </authorList>
    </citation>
    <scope>SUBCELLULAR LOCATION</scope>
    <scope>INTERACTION WITH CHMP2A</scope>
</reference>
<reference key="5">
    <citation type="journal article" date="2009" name="Mol. Biol. Cell">
        <title>Essential role of hIST1 in cytokinesis.</title>
        <authorList>
            <person name="Agromayor M."/>
            <person name="Carlton J.G."/>
            <person name="Phelan J.P."/>
            <person name="Matthews D.R."/>
            <person name="Carlin L.M."/>
            <person name="Ameer-Beg S."/>
            <person name="Bowers K."/>
            <person name="Martin-Serrano J."/>
        </authorList>
    </citation>
    <scope>INTERACTION WITH CHMP1B</scope>
</reference>
<reference key="6">
    <citation type="journal article" date="2011" name="BMC Syst. Biol.">
        <title>Initial characterization of the human central proteome.</title>
        <authorList>
            <person name="Burkard T.R."/>
            <person name="Planyavsky M."/>
            <person name="Kaupe I."/>
            <person name="Breitwieser F.P."/>
            <person name="Buerckstuemmer T."/>
            <person name="Bennett K.L."/>
            <person name="Superti-Furga G."/>
            <person name="Colinge J."/>
        </authorList>
    </citation>
    <scope>IDENTIFICATION BY MASS SPECTROMETRY [LARGE SCALE ANALYSIS]</scope>
</reference>
<reference key="7">
    <citation type="journal article" date="2012" name="Mol. Biol. Cell">
        <title>MITD1 is recruited to midbodies by ESCRT-III and participates in cytokinesis.</title>
        <authorList>
            <person name="Lee S."/>
            <person name="Chang J."/>
            <person name="Renvoise B."/>
            <person name="Tipirneni A."/>
            <person name="Yang S."/>
            <person name="Blackstone C."/>
        </authorList>
    </citation>
    <scope>FUNCTION</scope>
    <scope>INTERACTION WITH CHMP1A AND IST1</scope>
    <scope>SUBCELLULAR LOCATION</scope>
    <scope>SUBUNIT</scope>
</reference>
<reference key="8">
    <citation type="journal article" date="2012" name="Proc. Natl. Acad. Sci. U.S.A.">
        <title>ESCRT-III binding protein MITD1 is involved in cytokinesis and has an unanticipated PLD fold that binds membranes.</title>
        <authorList>
            <person name="Hadders M.A."/>
            <person name="Agromayor M."/>
            <person name="Obita T."/>
            <person name="Perisic O."/>
            <person name="Caballe A."/>
            <person name="Kloc M."/>
            <person name="Lamers M.H."/>
            <person name="Williams R.L."/>
            <person name="Martin-Serrano J."/>
        </authorList>
    </citation>
    <scope>X-RAY CRYSTALLOGRAPHY (1.91 ANGSTROMS) IN COMPLEX WITH CHMP1A</scope>
    <scope>FUNCTION</scope>
    <scope>SUBUNIT</scope>
    <scope>DOMAIN</scope>
    <scope>INTERACTION WITH CHMP1A; CHMP1B; CHMP2A AND IST1</scope>
    <scope>MUTAGENESIS OF MET-69; GLU-73; TYR-132; ARG-168; ARG-220; PHE-221; TYR-225 AND ARG-231</scope>
    <scope>SUBCELLULAR LOCATION</scope>
</reference>
<accession>Q8WV92</accession>
<accession>Q69YV0</accession>
<organism>
    <name type="scientific">Homo sapiens</name>
    <name type="common">Human</name>
    <dbReference type="NCBI Taxonomy" id="9606"/>
    <lineage>
        <taxon>Eukaryota</taxon>
        <taxon>Metazoa</taxon>
        <taxon>Chordata</taxon>
        <taxon>Craniata</taxon>
        <taxon>Vertebrata</taxon>
        <taxon>Euteleostomi</taxon>
        <taxon>Mammalia</taxon>
        <taxon>Eutheria</taxon>
        <taxon>Euarchontoglires</taxon>
        <taxon>Primates</taxon>
        <taxon>Haplorrhini</taxon>
        <taxon>Catarrhini</taxon>
        <taxon>Hominidae</taxon>
        <taxon>Homo</taxon>
    </lineage>
</organism>
<sequence>MAKSGLRQDPQSTAAATVLKRAVELDSESRYPQALVCYQEGIDLLLQVLKGTKDNTKRCNLREKISKYMDRAENIKKYLDQEKEDGKYHKQIKIEENATGFSYESLFREYLNETVTEVWIEDPYIRHTHQLYNFLRFCEMLIKRPCKVKTIHLLTSLDEGIEQVQQSRGLQEIEESLRSHGVLLEVQYSSSIHDREIRFNNGWMIKIGRGLDYFKKPQSRFSLGYCDFDLRPCHETTVDIFHKKHTKNI</sequence>
<name>MITD1_HUMAN</name>
<protein>
    <recommendedName>
        <fullName>MIT domain-containing protein 1</fullName>
    </recommendedName>
</protein>
<keyword id="KW-0002">3D-structure</keyword>
<keyword id="KW-0131">Cell cycle</keyword>
<keyword id="KW-0132">Cell division</keyword>
<keyword id="KW-0967">Endosome</keyword>
<keyword id="KW-0472">Membrane</keyword>
<keyword id="KW-1267">Proteomics identification</keyword>
<keyword id="KW-1185">Reference proteome</keyword>
<keyword id="KW-0813">Transport</keyword>
<dbReference type="EMBL" id="AC092587">
    <property type="protein sequence ID" value="AAX88928.1"/>
    <property type="molecule type" value="Genomic_DNA"/>
</dbReference>
<dbReference type="EMBL" id="BC018453">
    <property type="protein sequence ID" value="AAH18453.1"/>
    <property type="molecule type" value="mRNA"/>
</dbReference>
<dbReference type="EMBL" id="AL161992">
    <property type="protein sequence ID" value="CAH10777.1"/>
    <property type="molecule type" value="mRNA"/>
</dbReference>
<dbReference type="CCDS" id="CCDS2040.1"/>
<dbReference type="RefSeq" id="NP_001307346.1">
    <property type="nucleotide sequence ID" value="NM_001320417.1"/>
</dbReference>
<dbReference type="RefSeq" id="NP_001307347.1">
    <property type="nucleotide sequence ID" value="NM_001320418.1"/>
</dbReference>
<dbReference type="RefSeq" id="NP_001307348.1">
    <property type="nucleotide sequence ID" value="NM_001320419.1"/>
</dbReference>
<dbReference type="RefSeq" id="NP_620153.1">
    <property type="nucleotide sequence ID" value="NM_138798.3"/>
</dbReference>
<dbReference type="PDB" id="2YMB">
    <property type="method" value="X-ray"/>
    <property type="resolution" value="3.40 A"/>
    <property type="chains" value="A/B/C/D=1-249"/>
</dbReference>
<dbReference type="PDB" id="4A5X">
    <property type="method" value="X-ray"/>
    <property type="resolution" value="1.91 A"/>
    <property type="chains" value="A/B=9-85"/>
</dbReference>
<dbReference type="PDB" id="4A5Z">
    <property type="method" value="X-ray"/>
    <property type="resolution" value="2.30 A"/>
    <property type="chains" value="A/B/C/D=90-243"/>
</dbReference>
<dbReference type="PDBsum" id="2YMB"/>
<dbReference type="PDBsum" id="4A5X"/>
<dbReference type="PDBsum" id="4A5Z"/>
<dbReference type="SMR" id="Q8WV92"/>
<dbReference type="BioGRID" id="126197">
    <property type="interactions" value="48"/>
</dbReference>
<dbReference type="FunCoup" id="Q8WV92">
    <property type="interactions" value="1297"/>
</dbReference>
<dbReference type="IntAct" id="Q8WV92">
    <property type="interactions" value="37"/>
</dbReference>
<dbReference type="STRING" id="9606.ENSP00000289359"/>
<dbReference type="GlyGen" id="Q8WV92">
    <property type="glycosylation" value="1 site, 1 O-linked glycan (1 site)"/>
</dbReference>
<dbReference type="iPTMnet" id="Q8WV92"/>
<dbReference type="PhosphoSitePlus" id="Q8WV92"/>
<dbReference type="BioMuta" id="MITD1"/>
<dbReference type="DMDM" id="74730820"/>
<dbReference type="jPOST" id="Q8WV92"/>
<dbReference type="MassIVE" id="Q8WV92"/>
<dbReference type="PaxDb" id="9606-ENSP00000289359"/>
<dbReference type="PeptideAtlas" id="Q8WV92"/>
<dbReference type="ProteomicsDB" id="74764"/>
<dbReference type="Pumba" id="Q8WV92"/>
<dbReference type="Antibodypedia" id="47520">
    <property type="antibodies" value="83 antibodies from 22 providers"/>
</dbReference>
<dbReference type="DNASU" id="129531"/>
<dbReference type="Ensembl" id="ENST00000289359.6">
    <property type="protein sequence ID" value="ENSP00000289359.2"/>
    <property type="gene ID" value="ENSG00000158411.11"/>
</dbReference>
<dbReference type="GeneID" id="129531"/>
<dbReference type="KEGG" id="hsa:129531"/>
<dbReference type="MANE-Select" id="ENST00000289359.6">
    <property type="protein sequence ID" value="ENSP00000289359.2"/>
    <property type="RefSeq nucleotide sequence ID" value="NM_138798.3"/>
    <property type="RefSeq protein sequence ID" value="NP_620153.1"/>
</dbReference>
<dbReference type="UCSC" id="uc002szs.2">
    <property type="organism name" value="human"/>
</dbReference>
<dbReference type="AGR" id="HGNC:25207"/>
<dbReference type="CTD" id="129531"/>
<dbReference type="DisGeNET" id="129531"/>
<dbReference type="GeneCards" id="MITD1"/>
<dbReference type="HGNC" id="HGNC:25207">
    <property type="gene designation" value="MITD1"/>
</dbReference>
<dbReference type="HPA" id="ENSG00000158411">
    <property type="expression patterns" value="Low tissue specificity"/>
</dbReference>
<dbReference type="MalaCards" id="MITD1"/>
<dbReference type="neXtProt" id="NX_Q8WV92"/>
<dbReference type="OpenTargets" id="ENSG00000158411"/>
<dbReference type="PharmGKB" id="PA147357601"/>
<dbReference type="VEuPathDB" id="HostDB:ENSG00000158411"/>
<dbReference type="eggNOG" id="KOG4509">
    <property type="taxonomic scope" value="Eukaryota"/>
</dbReference>
<dbReference type="GeneTree" id="ENSGT00390000010868"/>
<dbReference type="InParanoid" id="Q8WV92"/>
<dbReference type="OMA" id="FYKASNP"/>
<dbReference type="OrthoDB" id="19553at2759"/>
<dbReference type="PAN-GO" id="Q8WV92">
    <property type="GO annotations" value="2 GO annotations based on evolutionary models"/>
</dbReference>
<dbReference type="PhylomeDB" id="Q8WV92"/>
<dbReference type="TreeFam" id="TF313066"/>
<dbReference type="PathwayCommons" id="Q8WV92"/>
<dbReference type="SignaLink" id="Q8WV92"/>
<dbReference type="BioGRID-ORCS" id="129531">
    <property type="hits" value="23 hits in 1165 CRISPR screens"/>
</dbReference>
<dbReference type="EvolutionaryTrace" id="Q8WV92"/>
<dbReference type="GenomeRNAi" id="129531"/>
<dbReference type="Pharos" id="Q8WV92">
    <property type="development level" value="Tbio"/>
</dbReference>
<dbReference type="PRO" id="PR:Q8WV92"/>
<dbReference type="Proteomes" id="UP000005640">
    <property type="component" value="Chromosome 2"/>
</dbReference>
<dbReference type="RNAct" id="Q8WV92">
    <property type="molecule type" value="protein"/>
</dbReference>
<dbReference type="Bgee" id="ENSG00000158411">
    <property type="expression patterns" value="Expressed in calcaneal tendon and 180 other cell types or tissues"/>
</dbReference>
<dbReference type="ExpressionAtlas" id="Q8WV92">
    <property type="expression patterns" value="baseline and differential"/>
</dbReference>
<dbReference type="GO" id="GO:0070062">
    <property type="term" value="C:extracellular exosome"/>
    <property type="evidence" value="ECO:0007005"/>
    <property type="project" value="UniProtKB"/>
</dbReference>
<dbReference type="GO" id="GO:0043231">
    <property type="term" value="C:intracellular membrane-bounded organelle"/>
    <property type="evidence" value="ECO:0000314"/>
    <property type="project" value="HPA"/>
</dbReference>
<dbReference type="GO" id="GO:0031902">
    <property type="term" value="C:late endosome membrane"/>
    <property type="evidence" value="ECO:0007669"/>
    <property type="project" value="UniProtKB-SubCell"/>
</dbReference>
<dbReference type="GO" id="GO:0016020">
    <property type="term" value="C:membrane"/>
    <property type="evidence" value="ECO:0000314"/>
    <property type="project" value="UniProtKB"/>
</dbReference>
<dbReference type="GO" id="GO:0030496">
    <property type="term" value="C:midbody"/>
    <property type="evidence" value="ECO:0000315"/>
    <property type="project" value="UniProtKB"/>
</dbReference>
<dbReference type="GO" id="GO:0042802">
    <property type="term" value="F:identical protein binding"/>
    <property type="evidence" value="ECO:0000353"/>
    <property type="project" value="UniProtKB"/>
</dbReference>
<dbReference type="GO" id="GO:0035091">
    <property type="term" value="F:phosphatidylinositol binding"/>
    <property type="evidence" value="ECO:0000315"/>
    <property type="project" value="UniProtKB"/>
</dbReference>
<dbReference type="GO" id="GO:0019904">
    <property type="term" value="F:protein domain specific binding"/>
    <property type="evidence" value="ECO:0000353"/>
    <property type="project" value="UniProtKB"/>
</dbReference>
<dbReference type="GO" id="GO:0061952">
    <property type="term" value="P:midbody abscission"/>
    <property type="evidence" value="ECO:0000315"/>
    <property type="project" value="UniProtKB"/>
</dbReference>
<dbReference type="GO" id="GO:0000281">
    <property type="term" value="P:mitotic cytokinesis"/>
    <property type="evidence" value="ECO:0000315"/>
    <property type="project" value="UniProtKB"/>
</dbReference>
<dbReference type="GO" id="GO:0032091">
    <property type="term" value="P:negative regulation of protein binding"/>
    <property type="evidence" value="ECO:0000315"/>
    <property type="project" value="UniProtKB"/>
</dbReference>
<dbReference type="CDD" id="cd02683">
    <property type="entry name" value="MIT_1"/>
    <property type="match status" value="1"/>
</dbReference>
<dbReference type="CDD" id="cd02685">
    <property type="entry name" value="MIT_C"/>
    <property type="match status" value="1"/>
</dbReference>
<dbReference type="FunFam" id="1.20.58.80:FF:000021">
    <property type="entry name" value="MIT domain-containing protein 1"/>
    <property type="match status" value="1"/>
</dbReference>
<dbReference type="FunFam" id="3.30.870.30:FF:000001">
    <property type="entry name" value="MIT domain-containing protein 1"/>
    <property type="match status" value="1"/>
</dbReference>
<dbReference type="Gene3D" id="3.30.870.30">
    <property type="entry name" value="MITD, C-terminal phospholipase D-like domain"/>
    <property type="match status" value="1"/>
</dbReference>
<dbReference type="Gene3D" id="1.20.58.80">
    <property type="entry name" value="Phosphotransferase system, lactose/cellobiose-type IIA subunit"/>
    <property type="match status" value="1"/>
</dbReference>
<dbReference type="IDEAL" id="IID00575"/>
<dbReference type="InterPro" id="IPR007330">
    <property type="entry name" value="MIT_dom"/>
</dbReference>
<dbReference type="InterPro" id="IPR036181">
    <property type="entry name" value="MIT_dom_sf"/>
</dbReference>
<dbReference type="InterPro" id="IPR052817">
    <property type="entry name" value="MIT_domain_contain_protein1"/>
</dbReference>
<dbReference type="InterPro" id="IPR032341">
    <property type="entry name" value="MITD1_C"/>
</dbReference>
<dbReference type="InterPro" id="IPR038113">
    <property type="entry name" value="MITD1_C_sf"/>
</dbReference>
<dbReference type="InterPro" id="IPR045331">
    <property type="entry name" value="MITD1_N"/>
</dbReference>
<dbReference type="PANTHER" id="PTHR21222">
    <property type="entry name" value="MIT DOMAIN-CONTAINING PROTEIN 1"/>
    <property type="match status" value="1"/>
</dbReference>
<dbReference type="PANTHER" id="PTHR21222:SF1">
    <property type="entry name" value="MIT DOMAIN-CONTAINING PROTEIN 1"/>
    <property type="match status" value="1"/>
</dbReference>
<dbReference type="Pfam" id="PF04212">
    <property type="entry name" value="MIT"/>
    <property type="match status" value="1"/>
</dbReference>
<dbReference type="Pfam" id="PF16565">
    <property type="entry name" value="MIT_C"/>
    <property type="match status" value="1"/>
</dbReference>
<dbReference type="SMART" id="SM00745">
    <property type="entry name" value="MIT"/>
    <property type="match status" value="1"/>
</dbReference>
<dbReference type="SUPFAM" id="SSF116846">
    <property type="entry name" value="MIT domain"/>
    <property type="match status" value="1"/>
</dbReference>
<feature type="chain" id="PRO_0000260495" description="MIT domain-containing protein 1">
    <location>
        <begin position="1"/>
        <end position="249"/>
    </location>
</feature>
<feature type="domain" description="MIT">
    <location>
        <begin position="8"/>
        <end position="86"/>
    </location>
</feature>
<feature type="region of interest" description="Important for association with membranes">
    <location>
        <begin position="168"/>
        <end position="231"/>
    </location>
</feature>
<feature type="mutagenesis site" description="Abolishes interaction with CHMP1A, CHMP1B and CHMP2A." evidence="4">
    <original>M</original>
    <variation>D</variation>
    <location>
        <position position="69"/>
    </location>
</feature>
<feature type="mutagenesis site" description="Abolishes interaction with CHMP1A, CHMP1B and CHMP2A. Abolishes location at the midbody." evidence="4">
    <original>E</original>
    <variation>A</variation>
    <location>
        <position position="73"/>
    </location>
</feature>
<feature type="mutagenesis site" description="Abolishes homodimerization; when associated with A-221 and A-225." evidence="4">
    <original>Y</original>
    <variation>A</variation>
    <location>
        <position position="132"/>
    </location>
</feature>
<feature type="mutagenesis site" description="Strongly reduces binding to membranes; when associated with E-221 and E-231." evidence="4">
    <original>R</original>
    <variation>E</variation>
    <location>
        <position position="168"/>
    </location>
</feature>
<feature type="mutagenesis site" description="Strongly reduces binding to membranes; when associated with E-168 and E-231." evidence="4">
    <original>R</original>
    <variation>E</variation>
    <location>
        <position position="220"/>
    </location>
</feature>
<feature type="mutagenesis site" description="Abolishes homodimerization; when associated with A-132 and A-225." evidence="4">
    <original>F</original>
    <variation>A</variation>
    <location>
        <position position="221"/>
    </location>
</feature>
<feature type="mutagenesis site" description="Abolishes homodimerization; when associated with A-132 and A-221." evidence="4">
    <original>Y</original>
    <variation>A</variation>
    <location>
        <position position="225"/>
    </location>
</feature>
<feature type="mutagenesis site" description="Strongly reduces binding to membranes; when associated with E-221 and E-220." evidence="4">
    <original>R</original>
    <variation>E</variation>
    <location>
        <position position="231"/>
    </location>
</feature>
<feature type="sequence conflict" description="In Ref. 3; CAH10777." evidence="5" ref="3">
    <original>E</original>
    <variation>EGK</variation>
    <location>
        <position position="84"/>
    </location>
</feature>
<feature type="sequence conflict" description="In Ref. 3; CAH10777." evidence="5" ref="3">
    <original>Q</original>
    <variation>QV</variation>
    <location>
        <position position="130"/>
    </location>
</feature>
<feature type="helix" evidence="6">
    <location>
        <begin position="11"/>
        <end position="27"/>
    </location>
</feature>
<feature type="helix" evidence="6">
    <location>
        <begin position="31"/>
        <end position="50"/>
    </location>
</feature>
<feature type="helix" evidence="6">
    <location>
        <begin position="55"/>
        <end position="81"/>
    </location>
</feature>
<feature type="strand" evidence="7">
    <location>
        <begin position="90"/>
        <end position="94"/>
    </location>
</feature>
<feature type="helix" evidence="7">
    <location>
        <begin position="103"/>
        <end position="107"/>
    </location>
</feature>
<feature type="helix" evidence="7">
    <location>
        <begin position="108"/>
        <end position="110"/>
    </location>
</feature>
<feature type="strand" evidence="7">
    <location>
        <begin position="117"/>
        <end position="121"/>
    </location>
</feature>
<feature type="helix" evidence="7">
    <location>
        <begin position="128"/>
        <end position="142"/>
    </location>
</feature>
<feature type="strand" evidence="7">
    <location>
        <begin position="150"/>
        <end position="155"/>
    </location>
</feature>
<feature type="helix" evidence="7">
    <location>
        <begin position="163"/>
        <end position="179"/>
    </location>
</feature>
<feature type="strand" evidence="7">
    <location>
        <begin position="183"/>
        <end position="188"/>
    </location>
</feature>
<feature type="strand" evidence="7">
    <location>
        <begin position="196"/>
        <end position="199"/>
    </location>
</feature>
<feature type="strand" evidence="7">
    <location>
        <begin position="202"/>
        <end position="207"/>
    </location>
</feature>
<feature type="turn" evidence="7">
    <location>
        <begin position="208"/>
        <end position="211"/>
    </location>
</feature>
<feature type="helix" evidence="7">
    <location>
        <begin position="228"/>
        <end position="230"/>
    </location>
</feature>
<feature type="strand" evidence="7">
    <location>
        <begin position="236"/>
        <end position="242"/>
    </location>
</feature>
<gene>
    <name type="primary">MITD1</name>
</gene>